<keyword id="KW-0143">Chaperone</keyword>
<keyword id="KW-0963">Cytoplasm</keyword>
<sequence length="94" mass="10184">MLKPLGDRIVIELIQTEEKTASGIVLPDTAKEKPQEGKVVAVGSGRVLDNGERVAPEVSVGDRIIFSKYAGTEVKYDGKEYLILRESDILAVIG</sequence>
<protein>
    <recommendedName>
        <fullName evidence="1">Co-chaperonin GroES</fullName>
    </recommendedName>
    <alternativeName>
        <fullName evidence="1">10 kDa chaperonin</fullName>
    </alternativeName>
    <alternativeName>
        <fullName evidence="1">Chaperonin-10</fullName>
        <shortName evidence="1">Cpn10</shortName>
    </alternativeName>
</protein>
<name>CH10_ANOFW</name>
<evidence type="ECO:0000255" key="1">
    <source>
        <dbReference type="HAMAP-Rule" id="MF_00580"/>
    </source>
</evidence>
<organism>
    <name type="scientific">Anoxybacillus flavithermus (strain DSM 21510 / WK1)</name>
    <dbReference type="NCBI Taxonomy" id="491915"/>
    <lineage>
        <taxon>Bacteria</taxon>
        <taxon>Bacillati</taxon>
        <taxon>Bacillota</taxon>
        <taxon>Bacilli</taxon>
        <taxon>Bacillales</taxon>
        <taxon>Anoxybacillaceae</taxon>
        <taxon>Anoxybacillus</taxon>
    </lineage>
</organism>
<comment type="function">
    <text evidence="1">Together with the chaperonin GroEL, plays an essential role in assisting protein folding. The GroEL-GroES system forms a nano-cage that allows encapsulation of the non-native substrate proteins and provides a physical environment optimized to promote and accelerate protein folding. GroES binds to the apical surface of the GroEL ring, thereby capping the opening of the GroEL channel.</text>
</comment>
<comment type="subunit">
    <text evidence="1">Heptamer of 7 subunits arranged in a ring. Interacts with the chaperonin GroEL.</text>
</comment>
<comment type="subcellular location">
    <subcellularLocation>
        <location evidence="1">Cytoplasm</location>
    </subcellularLocation>
</comment>
<comment type="similarity">
    <text evidence="1">Belongs to the GroES chaperonin family.</text>
</comment>
<gene>
    <name evidence="1" type="primary">groES</name>
    <name evidence="1" type="synonym">groS</name>
    <name type="ordered locus">Aflv_0211</name>
</gene>
<dbReference type="EMBL" id="CP000922">
    <property type="protein sequence ID" value="ACJ32595.1"/>
    <property type="molecule type" value="Genomic_DNA"/>
</dbReference>
<dbReference type="RefSeq" id="WP_004888755.1">
    <property type="nucleotide sequence ID" value="NC_011567.1"/>
</dbReference>
<dbReference type="SMR" id="B7GFR5"/>
<dbReference type="STRING" id="491915.Aflv_0211"/>
<dbReference type="GeneID" id="7036440"/>
<dbReference type="KEGG" id="afl:Aflv_0211"/>
<dbReference type="eggNOG" id="COG0234">
    <property type="taxonomic scope" value="Bacteria"/>
</dbReference>
<dbReference type="HOGENOM" id="CLU_132825_2_0_9"/>
<dbReference type="Proteomes" id="UP000000742">
    <property type="component" value="Chromosome"/>
</dbReference>
<dbReference type="GO" id="GO:0005737">
    <property type="term" value="C:cytoplasm"/>
    <property type="evidence" value="ECO:0007669"/>
    <property type="project" value="UniProtKB-SubCell"/>
</dbReference>
<dbReference type="GO" id="GO:0005524">
    <property type="term" value="F:ATP binding"/>
    <property type="evidence" value="ECO:0007669"/>
    <property type="project" value="InterPro"/>
</dbReference>
<dbReference type="GO" id="GO:0046872">
    <property type="term" value="F:metal ion binding"/>
    <property type="evidence" value="ECO:0007669"/>
    <property type="project" value="TreeGrafter"/>
</dbReference>
<dbReference type="GO" id="GO:0044183">
    <property type="term" value="F:protein folding chaperone"/>
    <property type="evidence" value="ECO:0007669"/>
    <property type="project" value="InterPro"/>
</dbReference>
<dbReference type="GO" id="GO:0051087">
    <property type="term" value="F:protein-folding chaperone binding"/>
    <property type="evidence" value="ECO:0007669"/>
    <property type="project" value="TreeGrafter"/>
</dbReference>
<dbReference type="GO" id="GO:0051082">
    <property type="term" value="F:unfolded protein binding"/>
    <property type="evidence" value="ECO:0007669"/>
    <property type="project" value="TreeGrafter"/>
</dbReference>
<dbReference type="GO" id="GO:0051085">
    <property type="term" value="P:chaperone cofactor-dependent protein refolding"/>
    <property type="evidence" value="ECO:0007669"/>
    <property type="project" value="TreeGrafter"/>
</dbReference>
<dbReference type="CDD" id="cd00320">
    <property type="entry name" value="cpn10"/>
    <property type="match status" value="1"/>
</dbReference>
<dbReference type="FunFam" id="2.30.33.40:FF:000001">
    <property type="entry name" value="10 kDa chaperonin"/>
    <property type="match status" value="1"/>
</dbReference>
<dbReference type="Gene3D" id="2.30.33.40">
    <property type="entry name" value="GroES chaperonin"/>
    <property type="match status" value="1"/>
</dbReference>
<dbReference type="HAMAP" id="MF_00580">
    <property type="entry name" value="CH10"/>
    <property type="match status" value="1"/>
</dbReference>
<dbReference type="InterPro" id="IPR020818">
    <property type="entry name" value="Chaperonin_GroES"/>
</dbReference>
<dbReference type="InterPro" id="IPR037124">
    <property type="entry name" value="Chaperonin_GroES_sf"/>
</dbReference>
<dbReference type="InterPro" id="IPR018369">
    <property type="entry name" value="Chaprnonin_Cpn10_CS"/>
</dbReference>
<dbReference type="InterPro" id="IPR011032">
    <property type="entry name" value="GroES-like_sf"/>
</dbReference>
<dbReference type="NCBIfam" id="NF001527">
    <property type="entry name" value="PRK00364.1-2"/>
    <property type="match status" value="1"/>
</dbReference>
<dbReference type="NCBIfam" id="NF001530">
    <property type="entry name" value="PRK00364.1-6"/>
    <property type="match status" value="1"/>
</dbReference>
<dbReference type="NCBIfam" id="NF001531">
    <property type="entry name" value="PRK00364.2-2"/>
    <property type="match status" value="1"/>
</dbReference>
<dbReference type="NCBIfam" id="NF001532">
    <property type="entry name" value="PRK00364.2-3"/>
    <property type="match status" value="1"/>
</dbReference>
<dbReference type="NCBIfam" id="NF001533">
    <property type="entry name" value="PRK00364.2-4"/>
    <property type="match status" value="1"/>
</dbReference>
<dbReference type="NCBIfam" id="NF001534">
    <property type="entry name" value="PRK00364.2-5"/>
    <property type="match status" value="1"/>
</dbReference>
<dbReference type="PANTHER" id="PTHR10772">
    <property type="entry name" value="10 KDA HEAT SHOCK PROTEIN"/>
    <property type="match status" value="1"/>
</dbReference>
<dbReference type="PANTHER" id="PTHR10772:SF58">
    <property type="entry name" value="CO-CHAPERONIN GROES"/>
    <property type="match status" value="1"/>
</dbReference>
<dbReference type="Pfam" id="PF00166">
    <property type="entry name" value="Cpn10"/>
    <property type="match status" value="1"/>
</dbReference>
<dbReference type="PRINTS" id="PR00297">
    <property type="entry name" value="CHAPERONIN10"/>
</dbReference>
<dbReference type="SMART" id="SM00883">
    <property type="entry name" value="Cpn10"/>
    <property type="match status" value="1"/>
</dbReference>
<dbReference type="SUPFAM" id="SSF50129">
    <property type="entry name" value="GroES-like"/>
    <property type="match status" value="1"/>
</dbReference>
<dbReference type="PROSITE" id="PS00681">
    <property type="entry name" value="CHAPERONINS_CPN10"/>
    <property type="match status" value="1"/>
</dbReference>
<proteinExistence type="inferred from homology"/>
<accession>B7GFR5</accession>
<reference key="1">
    <citation type="journal article" date="2008" name="Genome Biol.">
        <title>Encapsulated in silica: genome, proteome and physiology of the thermophilic bacterium Anoxybacillus flavithermus WK1.</title>
        <authorList>
            <person name="Saw J.H."/>
            <person name="Mountain B.W."/>
            <person name="Feng L."/>
            <person name="Omelchenko M.V."/>
            <person name="Hou S."/>
            <person name="Saito J.A."/>
            <person name="Stott M.B."/>
            <person name="Li D."/>
            <person name="Zhao G."/>
            <person name="Wu J."/>
            <person name="Galperin M.Y."/>
            <person name="Koonin E.V."/>
            <person name="Makarova K.S."/>
            <person name="Wolf Y.I."/>
            <person name="Rigden D.J."/>
            <person name="Dunfield P.F."/>
            <person name="Wang L."/>
            <person name="Alam M."/>
        </authorList>
    </citation>
    <scope>NUCLEOTIDE SEQUENCE [LARGE SCALE GENOMIC DNA]</scope>
    <source>
        <strain>DSM 21510 / WK1</strain>
    </source>
</reference>
<feature type="chain" id="PRO_1000129621" description="Co-chaperonin GroES">
    <location>
        <begin position="1"/>
        <end position="94"/>
    </location>
</feature>